<accession>P0CJ01</accession>
<reference key="1">
    <citation type="journal article" date="2010" name="BMC Genomics">
        <title>Comparative venom gland transcriptome analysis of the scorpion Lychas mucronatus reveals intraspecific toxic gene diversity and new venomous components.</title>
        <authorList>
            <person name="Zhao R."/>
            <person name="Ma Y."/>
            <person name="He Y."/>
            <person name="Di Z."/>
            <person name="Wu Y.-L."/>
            <person name="Cao Z.-J."/>
            <person name="Li W.-X."/>
        </authorList>
    </citation>
    <scope>NUCLEOTIDE SEQUENCE [MRNA]</scope>
    <source>
        <strain>Yunnan</strain>
        <tissue>Venom gland</tissue>
    </source>
</reference>
<protein>
    <recommendedName>
        <fullName>Neurtoxin 10</fullName>
    </recommendedName>
</protein>
<evidence type="ECO:0000250" key="1"/>
<evidence type="ECO:0000255" key="2"/>
<evidence type="ECO:0000255" key="3">
    <source>
        <dbReference type="PROSITE-ProRule" id="PRU01210"/>
    </source>
</evidence>
<evidence type="ECO:0000305" key="4"/>
<comment type="subcellular location">
    <subcellularLocation>
        <location evidence="1">Secreted</location>
    </subcellularLocation>
</comment>
<comment type="tissue specificity">
    <text>Expressed by the venom gland.</text>
</comment>
<comment type="domain">
    <text evidence="4">Has the structural arrangement of an alpha-helix connected to antiparallel beta-sheets by disulfide bonds (CS-alpha/beta).</text>
</comment>
<comment type="similarity">
    <text evidence="4">Belongs to the long (3 C-C) scorpion toxin superfamily.</text>
</comment>
<dbReference type="EMBL" id="GT029010">
    <property type="status" value="NOT_ANNOTATED_CDS"/>
    <property type="molecule type" value="mRNA"/>
</dbReference>
<dbReference type="SMR" id="P0CJ01"/>
<dbReference type="GO" id="GO:0005576">
    <property type="term" value="C:extracellular region"/>
    <property type="evidence" value="ECO:0007669"/>
    <property type="project" value="UniProtKB-SubCell"/>
</dbReference>
<dbReference type="GO" id="GO:0019871">
    <property type="term" value="F:sodium channel inhibitor activity"/>
    <property type="evidence" value="ECO:0007669"/>
    <property type="project" value="InterPro"/>
</dbReference>
<dbReference type="GO" id="GO:0090729">
    <property type="term" value="F:toxin activity"/>
    <property type="evidence" value="ECO:0007669"/>
    <property type="project" value="UniProtKB-KW"/>
</dbReference>
<dbReference type="CDD" id="cd23106">
    <property type="entry name" value="neurotoxins_LC_scorpion"/>
    <property type="match status" value="1"/>
</dbReference>
<dbReference type="Gene3D" id="3.30.30.10">
    <property type="entry name" value="Knottin, scorpion toxin-like"/>
    <property type="match status" value="1"/>
</dbReference>
<dbReference type="InterPro" id="IPR044062">
    <property type="entry name" value="LCN-type_CS_alpha_beta_dom"/>
</dbReference>
<dbReference type="InterPro" id="IPR036574">
    <property type="entry name" value="Scorpion_toxin-like_sf"/>
</dbReference>
<dbReference type="InterPro" id="IPR002061">
    <property type="entry name" value="Scorpion_toxinL/defensin"/>
</dbReference>
<dbReference type="Pfam" id="PF00537">
    <property type="entry name" value="Toxin_3"/>
    <property type="match status" value="1"/>
</dbReference>
<dbReference type="SUPFAM" id="SSF57095">
    <property type="entry name" value="Scorpion toxin-like"/>
    <property type="match status" value="1"/>
</dbReference>
<dbReference type="PROSITE" id="PS51863">
    <property type="entry name" value="LCN_CSAB"/>
    <property type="match status" value="1"/>
</dbReference>
<sequence length="85" mass="9630">MKFCVAVSLLIIASMAGVISVSGYDVYPRDYAENYYYCGVRKDPDCSKICKLHGARVGYCHVKRCSCVDLPEKNQNFLSVIWKHC</sequence>
<feature type="signal peptide" evidence="2">
    <location>
        <begin position="1"/>
        <end position="23"/>
    </location>
</feature>
<feature type="chain" id="PRO_0000403892" description="Neurtoxin 10">
    <location>
        <begin position="24"/>
        <end position="85"/>
    </location>
</feature>
<feature type="domain" description="LCN-type CS-alpha/beta" evidence="3">
    <location>
        <begin position="24"/>
        <end position="85"/>
    </location>
</feature>
<feature type="disulfide bond" evidence="3">
    <location>
        <begin position="38"/>
        <end position="60"/>
    </location>
</feature>
<feature type="disulfide bond" evidence="3">
    <location>
        <begin position="46"/>
        <end position="65"/>
    </location>
</feature>
<feature type="disulfide bond" evidence="3">
    <location>
        <begin position="50"/>
        <end position="67"/>
    </location>
</feature>
<organism>
    <name type="scientific">Lychas mucronatus</name>
    <name type="common">Chinese swimming scorpion</name>
    <dbReference type="NCBI Taxonomy" id="172552"/>
    <lineage>
        <taxon>Eukaryota</taxon>
        <taxon>Metazoa</taxon>
        <taxon>Ecdysozoa</taxon>
        <taxon>Arthropoda</taxon>
        <taxon>Chelicerata</taxon>
        <taxon>Arachnida</taxon>
        <taxon>Scorpiones</taxon>
        <taxon>Buthida</taxon>
        <taxon>Buthoidea</taxon>
        <taxon>Buthidae</taxon>
        <taxon>Lychas</taxon>
    </lineage>
</organism>
<keyword id="KW-1015">Disulfide bond</keyword>
<keyword id="KW-0528">Neurotoxin</keyword>
<keyword id="KW-0964">Secreted</keyword>
<keyword id="KW-0732">Signal</keyword>
<keyword id="KW-0800">Toxin</keyword>
<proteinExistence type="evidence at transcript level"/>
<name>STX10_LYCMC</name>